<keyword id="KW-1003">Cell membrane</keyword>
<keyword id="KW-0328">Glycosyltransferase</keyword>
<keyword id="KW-0472">Membrane</keyword>
<keyword id="KW-1185">Reference proteome</keyword>
<keyword id="KW-0808">Transferase</keyword>
<keyword id="KW-0812">Transmembrane</keyword>
<keyword id="KW-1133">Transmembrane helix</keyword>
<organism>
    <name type="scientific">Bacillus subtilis (strain 168)</name>
    <dbReference type="NCBI Taxonomy" id="224308"/>
    <lineage>
        <taxon>Bacteria</taxon>
        <taxon>Bacillati</taxon>
        <taxon>Bacillota</taxon>
        <taxon>Bacilli</taxon>
        <taxon>Bacillales</taxon>
        <taxon>Bacillaceae</taxon>
        <taxon>Bacillus</taxon>
    </lineage>
</organism>
<comment type="subcellular location">
    <subcellularLocation>
        <location evidence="2">Cell membrane</location>
        <topology evidence="1">Multi-pass membrane protein</topology>
    </subcellularLocation>
</comment>
<comment type="similarity">
    <text evidence="2">Belongs to the glycosyltransferase 2 family.</text>
</comment>
<name>YDAM_BACSU</name>
<sequence length="420" mass="49772">MGNTLFFISLSLIWVMLLYHMFLMQGGFRHYMTFERNIPKWRENMKELPKVSVLIPAHNEEVVIRQTLKAMVNLYYPKDRLEIIVVNDNSSDRTGDIVNEFSEKYDFIKMVITKPPNAGKGKSSALNSGFAESNGDVICVYDADNTPEKMAVYYLVLGLMNDEKAGAVVGKFRVINAAKTLLTRFINIETICFQWMAQGGRWKWFKIATIPGTNFAIRRSIIEKLGGWDDKALAEDTELTIRVYNLGYHIRFFPAAITWEQEPETWKVWWRQRTRWARGNQYVVLKFLAQFFKLKRKRIIFDLFYFFFTYFLFFFGVIMSNAIFVVNLFYDLHLSVGFLAMILWILAFFLFMTEVMITLSIEKTEMNKQNFFIVFLMYFTYSQAWIVLVIYSLFVEIKHRLFKQEVKWYKTERYNQHKSG</sequence>
<proteinExistence type="inferred from homology"/>
<accession>P96587</accession>
<accession>Q797M4</accession>
<dbReference type="EC" id="2.4.-.-"/>
<dbReference type="EMBL" id="AB001488">
    <property type="protein sequence ID" value="BAA19267.1"/>
    <property type="molecule type" value="Genomic_DNA"/>
</dbReference>
<dbReference type="EMBL" id="AL009126">
    <property type="protein sequence ID" value="CAB12237.1"/>
    <property type="molecule type" value="Genomic_DNA"/>
</dbReference>
<dbReference type="PIR" id="D69769">
    <property type="entry name" value="D69769"/>
</dbReference>
<dbReference type="RefSeq" id="NP_388311.1">
    <property type="nucleotide sequence ID" value="NC_000964.3"/>
</dbReference>
<dbReference type="RefSeq" id="WP_003246697.1">
    <property type="nucleotide sequence ID" value="NZ_OZ025638.1"/>
</dbReference>
<dbReference type="SMR" id="P96587"/>
<dbReference type="FunCoup" id="P96587">
    <property type="interactions" value="375"/>
</dbReference>
<dbReference type="STRING" id="224308.BSU04300"/>
<dbReference type="CAZy" id="GT2">
    <property type="family name" value="Glycosyltransferase Family 2"/>
</dbReference>
<dbReference type="PaxDb" id="224308-BSU04300"/>
<dbReference type="EnsemblBacteria" id="CAB12237">
    <property type="protein sequence ID" value="CAB12237"/>
    <property type="gene ID" value="BSU_04300"/>
</dbReference>
<dbReference type="GeneID" id="939986"/>
<dbReference type="KEGG" id="bsu:BSU04300"/>
<dbReference type="PATRIC" id="fig|224308.179.peg.456"/>
<dbReference type="eggNOG" id="COG1215">
    <property type="taxonomic scope" value="Bacteria"/>
</dbReference>
<dbReference type="InParanoid" id="P96587"/>
<dbReference type="OrthoDB" id="9766299at2"/>
<dbReference type="PhylomeDB" id="P96587"/>
<dbReference type="BioCyc" id="BSUB:BSU04300-MONOMER"/>
<dbReference type="Proteomes" id="UP000001570">
    <property type="component" value="Chromosome"/>
</dbReference>
<dbReference type="GO" id="GO:0016020">
    <property type="term" value="C:membrane"/>
    <property type="evidence" value="ECO:0007669"/>
    <property type="project" value="UniProtKB-SubCell"/>
</dbReference>
<dbReference type="GO" id="GO:0016757">
    <property type="term" value="F:glycosyltransferase activity"/>
    <property type="evidence" value="ECO:0007669"/>
    <property type="project" value="UniProtKB-KW"/>
</dbReference>
<dbReference type="CDD" id="cd06423">
    <property type="entry name" value="CESA_like"/>
    <property type="match status" value="1"/>
</dbReference>
<dbReference type="Gene3D" id="3.90.550.10">
    <property type="entry name" value="Spore Coat Polysaccharide Biosynthesis Protein SpsA, Chain A"/>
    <property type="match status" value="1"/>
</dbReference>
<dbReference type="InterPro" id="IPR001173">
    <property type="entry name" value="Glyco_trans_2-like"/>
</dbReference>
<dbReference type="InterPro" id="IPR029044">
    <property type="entry name" value="Nucleotide-diphossugar_trans"/>
</dbReference>
<dbReference type="PANTHER" id="PTHR43630">
    <property type="entry name" value="POLY-BETA-1,6-N-ACETYL-D-GLUCOSAMINE SYNTHASE"/>
    <property type="match status" value="1"/>
</dbReference>
<dbReference type="PANTHER" id="PTHR43630:SF1">
    <property type="entry name" value="POLY-BETA-1,6-N-ACETYL-D-GLUCOSAMINE SYNTHASE"/>
    <property type="match status" value="1"/>
</dbReference>
<dbReference type="Pfam" id="PF00535">
    <property type="entry name" value="Glycos_transf_2"/>
    <property type="match status" value="1"/>
</dbReference>
<dbReference type="SUPFAM" id="SSF53448">
    <property type="entry name" value="Nucleotide-diphospho-sugar transferases"/>
    <property type="match status" value="1"/>
</dbReference>
<evidence type="ECO:0000255" key="1"/>
<evidence type="ECO:0000305" key="2"/>
<feature type="chain" id="PRO_0000378082" description="Probable glycosyltransferase YdaM">
    <location>
        <begin position="1"/>
        <end position="420"/>
    </location>
</feature>
<feature type="transmembrane region" description="Helical" evidence="1">
    <location>
        <begin position="4"/>
        <end position="24"/>
    </location>
</feature>
<feature type="transmembrane region" description="Helical" evidence="1">
    <location>
        <begin position="299"/>
        <end position="319"/>
    </location>
</feature>
<feature type="transmembrane region" description="Helical" evidence="1">
    <location>
        <begin position="332"/>
        <end position="352"/>
    </location>
</feature>
<feature type="transmembrane region" description="Helical" evidence="1">
    <location>
        <begin position="371"/>
        <end position="391"/>
    </location>
</feature>
<reference key="1">
    <citation type="journal article" date="1997" name="Mol. Gen. Genet.">
        <title>Characterization of an lrp-like (lrpC) gene from Bacillus subtilis.</title>
        <authorList>
            <person name="Beloin C."/>
            <person name="Ayora S."/>
            <person name="Exley R."/>
            <person name="Hirschbein L."/>
            <person name="Ogasawara N."/>
            <person name="Kasahara Y."/>
            <person name="Alonso J.C."/>
            <person name="Le Hegarat F."/>
        </authorList>
    </citation>
    <scope>NUCLEOTIDE SEQUENCE [GENOMIC DNA]</scope>
    <source>
        <strain>168</strain>
    </source>
</reference>
<reference key="2">
    <citation type="submission" date="1997-03" db="EMBL/GenBank/DDBJ databases">
        <title>A 148 kbp sequence of the region between 35 and 47 degree of the Bacillus subtilis genome.</title>
        <authorList>
            <person name="Kasahara Y."/>
            <person name="Nakai S."/>
            <person name="Lee S."/>
            <person name="Sadaie Y."/>
            <person name="Ogasawara N."/>
        </authorList>
    </citation>
    <scope>NUCLEOTIDE SEQUENCE [GENOMIC DNA]</scope>
    <source>
        <strain>168</strain>
    </source>
</reference>
<reference key="3">
    <citation type="journal article" date="1997" name="Nature">
        <title>The complete genome sequence of the Gram-positive bacterium Bacillus subtilis.</title>
        <authorList>
            <person name="Kunst F."/>
            <person name="Ogasawara N."/>
            <person name="Moszer I."/>
            <person name="Albertini A.M."/>
            <person name="Alloni G."/>
            <person name="Azevedo V."/>
            <person name="Bertero M.G."/>
            <person name="Bessieres P."/>
            <person name="Bolotin A."/>
            <person name="Borchert S."/>
            <person name="Borriss R."/>
            <person name="Boursier L."/>
            <person name="Brans A."/>
            <person name="Braun M."/>
            <person name="Brignell S.C."/>
            <person name="Bron S."/>
            <person name="Brouillet S."/>
            <person name="Bruschi C.V."/>
            <person name="Caldwell B."/>
            <person name="Capuano V."/>
            <person name="Carter N.M."/>
            <person name="Choi S.-K."/>
            <person name="Codani J.-J."/>
            <person name="Connerton I.F."/>
            <person name="Cummings N.J."/>
            <person name="Daniel R.A."/>
            <person name="Denizot F."/>
            <person name="Devine K.M."/>
            <person name="Duesterhoeft A."/>
            <person name="Ehrlich S.D."/>
            <person name="Emmerson P.T."/>
            <person name="Entian K.-D."/>
            <person name="Errington J."/>
            <person name="Fabret C."/>
            <person name="Ferrari E."/>
            <person name="Foulger D."/>
            <person name="Fritz C."/>
            <person name="Fujita M."/>
            <person name="Fujita Y."/>
            <person name="Fuma S."/>
            <person name="Galizzi A."/>
            <person name="Galleron N."/>
            <person name="Ghim S.-Y."/>
            <person name="Glaser P."/>
            <person name="Goffeau A."/>
            <person name="Golightly E.J."/>
            <person name="Grandi G."/>
            <person name="Guiseppi G."/>
            <person name="Guy B.J."/>
            <person name="Haga K."/>
            <person name="Haiech J."/>
            <person name="Harwood C.R."/>
            <person name="Henaut A."/>
            <person name="Hilbert H."/>
            <person name="Holsappel S."/>
            <person name="Hosono S."/>
            <person name="Hullo M.-F."/>
            <person name="Itaya M."/>
            <person name="Jones L.-M."/>
            <person name="Joris B."/>
            <person name="Karamata D."/>
            <person name="Kasahara Y."/>
            <person name="Klaerr-Blanchard M."/>
            <person name="Klein C."/>
            <person name="Kobayashi Y."/>
            <person name="Koetter P."/>
            <person name="Koningstein G."/>
            <person name="Krogh S."/>
            <person name="Kumano M."/>
            <person name="Kurita K."/>
            <person name="Lapidus A."/>
            <person name="Lardinois S."/>
            <person name="Lauber J."/>
            <person name="Lazarevic V."/>
            <person name="Lee S.-M."/>
            <person name="Levine A."/>
            <person name="Liu H."/>
            <person name="Masuda S."/>
            <person name="Mauel C."/>
            <person name="Medigue C."/>
            <person name="Medina N."/>
            <person name="Mellado R.P."/>
            <person name="Mizuno M."/>
            <person name="Moestl D."/>
            <person name="Nakai S."/>
            <person name="Noback M."/>
            <person name="Noone D."/>
            <person name="O'Reilly M."/>
            <person name="Ogawa K."/>
            <person name="Ogiwara A."/>
            <person name="Oudega B."/>
            <person name="Park S.-H."/>
            <person name="Parro V."/>
            <person name="Pohl T.M."/>
            <person name="Portetelle D."/>
            <person name="Porwollik S."/>
            <person name="Prescott A.M."/>
            <person name="Presecan E."/>
            <person name="Pujic P."/>
            <person name="Purnelle B."/>
            <person name="Rapoport G."/>
            <person name="Rey M."/>
            <person name="Reynolds S."/>
            <person name="Rieger M."/>
            <person name="Rivolta C."/>
            <person name="Rocha E."/>
            <person name="Roche B."/>
            <person name="Rose M."/>
            <person name="Sadaie Y."/>
            <person name="Sato T."/>
            <person name="Scanlan E."/>
            <person name="Schleich S."/>
            <person name="Schroeter R."/>
            <person name="Scoffone F."/>
            <person name="Sekiguchi J."/>
            <person name="Sekowska A."/>
            <person name="Seror S.J."/>
            <person name="Serror P."/>
            <person name="Shin B.-S."/>
            <person name="Soldo B."/>
            <person name="Sorokin A."/>
            <person name="Tacconi E."/>
            <person name="Takagi T."/>
            <person name="Takahashi H."/>
            <person name="Takemaru K."/>
            <person name="Takeuchi M."/>
            <person name="Tamakoshi A."/>
            <person name="Tanaka T."/>
            <person name="Terpstra P."/>
            <person name="Tognoni A."/>
            <person name="Tosato V."/>
            <person name="Uchiyama S."/>
            <person name="Vandenbol M."/>
            <person name="Vannier F."/>
            <person name="Vassarotti A."/>
            <person name="Viari A."/>
            <person name="Wambutt R."/>
            <person name="Wedler E."/>
            <person name="Wedler H."/>
            <person name="Weitzenegger T."/>
            <person name="Winters P."/>
            <person name="Wipat A."/>
            <person name="Yamamoto H."/>
            <person name="Yamane K."/>
            <person name="Yasumoto K."/>
            <person name="Yata K."/>
            <person name="Yoshida K."/>
            <person name="Yoshikawa H.-F."/>
            <person name="Zumstein E."/>
            <person name="Yoshikawa H."/>
            <person name="Danchin A."/>
        </authorList>
    </citation>
    <scope>NUCLEOTIDE SEQUENCE [LARGE SCALE GENOMIC DNA]</scope>
    <source>
        <strain>168</strain>
    </source>
</reference>
<gene>
    <name type="primary">ydaM</name>
    <name type="ordered locus">BSU04300</name>
</gene>
<protein>
    <recommendedName>
        <fullName>Probable glycosyltransferase YdaM</fullName>
        <ecNumber>2.4.-.-</ecNumber>
    </recommendedName>
</protein>